<sequence>MSGFCVLGCGTMGKALLTGIFDSIAENGNDVSDEIIIPNKFYACVKFPKEKEDVQKLFGDRVKVVMGAKENAEMAAISNVLLLSCKPQAAEDVLNSPKMKEALKGKLILSILAGKTISSLQSMLDESTRVIRIMPNTASRIRESMSVICPGPNATEEDIKFAEWVFNGIGRSMKLPEKLIDAATAVCGSGPAFVATMIEAMTDGGVMMGIPFPQAQELAAQTMVGTGRMVLQGQHPAMIRNDVSTPAGCTISGLLALEDGKIRSTIARGIEQATKTASGLGK</sequence>
<feature type="chain" id="PRO_0000187327" description="Pyrroline-5-carboxylate reductase">
    <location>
        <begin position="1"/>
        <end position="282"/>
    </location>
</feature>
<keyword id="KW-0028">Amino-acid biosynthesis</keyword>
<keyword id="KW-0521">NADP</keyword>
<keyword id="KW-0560">Oxidoreductase</keyword>
<keyword id="KW-0641">Proline biosynthesis</keyword>
<keyword id="KW-1185">Reference proteome</keyword>
<reference key="1">
    <citation type="journal article" date="2002" name="Nature">
        <title>The genome sequence of Schizosaccharomyces pombe.</title>
        <authorList>
            <person name="Wood V."/>
            <person name="Gwilliam R."/>
            <person name="Rajandream M.A."/>
            <person name="Lyne M.H."/>
            <person name="Lyne R."/>
            <person name="Stewart A."/>
            <person name="Sgouros J.G."/>
            <person name="Peat N."/>
            <person name="Hayles J."/>
            <person name="Baker S.G."/>
            <person name="Basham D."/>
            <person name="Bowman S."/>
            <person name="Brooks K."/>
            <person name="Brown D."/>
            <person name="Brown S."/>
            <person name="Chillingworth T."/>
            <person name="Churcher C.M."/>
            <person name="Collins M."/>
            <person name="Connor R."/>
            <person name="Cronin A."/>
            <person name="Davis P."/>
            <person name="Feltwell T."/>
            <person name="Fraser A."/>
            <person name="Gentles S."/>
            <person name="Goble A."/>
            <person name="Hamlin N."/>
            <person name="Harris D.E."/>
            <person name="Hidalgo J."/>
            <person name="Hodgson G."/>
            <person name="Holroyd S."/>
            <person name="Hornsby T."/>
            <person name="Howarth S."/>
            <person name="Huckle E.J."/>
            <person name="Hunt S."/>
            <person name="Jagels K."/>
            <person name="James K.D."/>
            <person name="Jones L."/>
            <person name="Jones M."/>
            <person name="Leather S."/>
            <person name="McDonald S."/>
            <person name="McLean J."/>
            <person name="Mooney P."/>
            <person name="Moule S."/>
            <person name="Mungall K.L."/>
            <person name="Murphy L.D."/>
            <person name="Niblett D."/>
            <person name="Odell C."/>
            <person name="Oliver K."/>
            <person name="O'Neil S."/>
            <person name="Pearson D."/>
            <person name="Quail M.A."/>
            <person name="Rabbinowitsch E."/>
            <person name="Rutherford K.M."/>
            <person name="Rutter S."/>
            <person name="Saunders D."/>
            <person name="Seeger K."/>
            <person name="Sharp S."/>
            <person name="Skelton J."/>
            <person name="Simmonds M.N."/>
            <person name="Squares R."/>
            <person name="Squares S."/>
            <person name="Stevens K."/>
            <person name="Taylor K."/>
            <person name="Taylor R.G."/>
            <person name="Tivey A."/>
            <person name="Walsh S.V."/>
            <person name="Warren T."/>
            <person name="Whitehead S."/>
            <person name="Woodward J.R."/>
            <person name="Volckaert G."/>
            <person name="Aert R."/>
            <person name="Robben J."/>
            <person name="Grymonprez B."/>
            <person name="Weltjens I."/>
            <person name="Vanstreels E."/>
            <person name="Rieger M."/>
            <person name="Schaefer M."/>
            <person name="Mueller-Auer S."/>
            <person name="Gabel C."/>
            <person name="Fuchs M."/>
            <person name="Duesterhoeft A."/>
            <person name="Fritzc C."/>
            <person name="Holzer E."/>
            <person name="Moestl D."/>
            <person name="Hilbert H."/>
            <person name="Borzym K."/>
            <person name="Langer I."/>
            <person name="Beck A."/>
            <person name="Lehrach H."/>
            <person name="Reinhardt R."/>
            <person name="Pohl T.M."/>
            <person name="Eger P."/>
            <person name="Zimmermann W."/>
            <person name="Wedler H."/>
            <person name="Wambutt R."/>
            <person name="Purnelle B."/>
            <person name="Goffeau A."/>
            <person name="Cadieu E."/>
            <person name="Dreano S."/>
            <person name="Gloux S."/>
            <person name="Lelaure V."/>
            <person name="Mottier S."/>
            <person name="Galibert F."/>
            <person name="Aves S.J."/>
            <person name="Xiang Z."/>
            <person name="Hunt C."/>
            <person name="Moore K."/>
            <person name="Hurst S.M."/>
            <person name="Lucas M."/>
            <person name="Rochet M."/>
            <person name="Gaillardin C."/>
            <person name="Tallada V.A."/>
            <person name="Garzon A."/>
            <person name="Thode G."/>
            <person name="Daga R.R."/>
            <person name="Cruzado L."/>
            <person name="Jimenez J."/>
            <person name="Sanchez M."/>
            <person name="del Rey F."/>
            <person name="Benito J."/>
            <person name="Dominguez A."/>
            <person name="Revuelta J.L."/>
            <person name="Moreno S."/>
            <person name="Armstrong J."/>
            <person name="Forsburg S.L."/>
            <person name="Cerutti L."/>
            <person name="Lowe T."/>
            <person name="McCombie W.R."/>
            <person name="Paulsen I."/>
            <person name="Potashkin J."/>
            <person name="Shpakovski G.V."/>
            <person name="Ussery D."/>
            <person name="Barrell B.G."/>
            <person name="Nurse P."/>
        </authorList>
    </citation>
    <scope>NUCLEOTIDE SEQUENCE [LARGE SCALE GENOMIC DNA]</scope>
    <source>
        <strain>972 / ATCC 24843</strain>
    </source>
</reference>
<reference key="2">
    <citation type="journal article" date="2000" name="Bioorg. Khim.">
        <title>Chromosomal localization of the rpb9+ and tfa1+ genes encoding components of the mRNA synthesis machinery of Schizosaccharomyces pombe.</title>
        <authorList>
            <person name="Shpakovski G.V."/>
            <person name="Baranova G.M."/>
        </authorList>
    </citation>
    <scope>NUCLEOTIDE SEQUENCE [GENOMIC DNA] OF 1-96</scope>
    <source>
        <strain>972 / ATCC 24843</strain>
    </source>
</reference>
<proteinExistence type="inferred from homology"/>
<organism>
    <name type="scientific">Schizosaccharomyces pombe (strain 972 / ATCC 24843)</name>
    <name type="common">Fission yeast</name>
    <dbReference type="NCBI Taxonomy" id="284812"/>
    <lineage>
        <taxon>Eukaryota</taxon>
        <taxon>Fungi</taxon>
        <taxon>Dikarya</taxon>
        <taxon>Ascomycota</taxon>
        <taxon>Taphrinomycotina</taxon>
        <taxon>Schizosaccharomycetes</taxon>
        <taxon>Schizosaccharomycetales</taxon>
        <taxon>Schizosaccharomycetaceae</taxon>
        <taxon>Schizosaccharomyces</taxon>
    </lineage>
</organism>
<gene>
    <name type="primary">pro3</name>
    <name type="ORF">SPAPYUG7.05</name>
</gene>
<dbReference type="EC" id="1.5.1.2"/>
<dbReference type="EMBL" id="CU329670">
    <property type="protein sequence ID" value="CAB66314.1"/>
    <property type="molecule type" value="Genomic_DNA"/>
</dbReference>
<dbReference type="EMBL" id="AF237418">
    <property type="protein sequence ID" value="AAL55659.1"/>
    <property type="molecule type" value="Genomic_DNA"/>
</dbReference>
<dbReference type="PIR" id="T50305">
    <property type="entry name" value="T50305"/>
</dbReference>
<dbReference type="RefSeq" id="NP_594706.1">
    <property type="nucleotide sequence ID" value="NM_001020133.2"/>
</dbReference>
<dbReference type="SMR" id="Q9P7Y7"/>
<dbReference type="FunCoup" id="Q9P7Y7">
    <property type="interactions" value="166"/>
</dbReference>
<dbReference type="STRING" id="284812.Q9P7Y7"/>
<dbReference type="iPTMnet" id="Q9P7Y7"/>
<dbReference type="PaxDb" id="4896-SPAPYUG7.05.1"/>
<dbReference type="EnsemblFungi" id="SPAPYUG7.05.1">
    <property type="protein sequence ID" value="SPAPYUG7.05.1:pep"/>
    <property type="gene ID" value="SPAPYUG7.05"/>
</dbReference>
<dbReference type="GeneID" id="2543212"/>
<dbReference type="KEGG" id="spo:2543212"/>
<dbReference type="PomBase" id="SPAPYUG7.05">
    <property type="gene designation" value="pro3"/>
</dbReference>
<dbReference type="VEuPathDB" id="FungiDB:SPAPYUG7.05"/>
<dbReference type="eggNOG" id="KOG3124">
    <property type="taxonomic scope" value="Eukaryota"/>
</dbReference>
<dbReference type="HOGENOM" id="CLU_042344_1_1_1"/>
<dbReference type="InParanoid" id="Q9P7Y7"/>
<dbReference type="OMA" id="VWAVKPQ"/>
<dbReference type="PhylomeDB" id="Q9P7Y7"/>
<dbReference type="Reactome" id="R-SPO-8964539">
    <property type="pathway name" value="Glutamate and glutamine metabolism"/>
</dbReference>
<dbReference type="UniPathway" id="UPA00098">
    <property type="reaction ID" value="UER00361"/>
</dbReference>
<dbReference type="PRO" id="PR:Q9P7Y7"/>
<dbReference type="Proteomes" id="UP000002485">
    <property type="component" value="Chromosome I"/>
</dbReference>
<dbReference type="GO" id="GO:0005829">
    <property type="term" value="C:cytosol"/>
    <property type="evidence" value="ECO:0007005"/>
    <property type="project" value="PomBase"/>
</dbReference>
<dbReference type="GO" id="GO:0004735">
    <property type="term" value="F:pyrroline-5-carboxylate reductase activity"/>
    <property type="evidence" value="ECO:0000318"/>
    <property type="project" value="GO_Central"/>
</dbReference>
<dbReference type="GO" id="GO:0055129">
    <property type="term" value="P:L-proline biosynthetic process"/>
    <property type="evidence" value="ECO:0000318"/>
    <property type="project" value="GO_Central"/>
</dbReference>
<dbReference type="FunFam" id="1.10.3730.10:FF:000001">
    <property type="entry name" value="Pyrroline-5-carboxylate reductase"/>
    <property type="match status" value="1"/>
</dbReference>
<dbReference type="Gene3D" id="3.40.50.720">
    <property type="entry name" value="NAD(P)-binding Rossmann-like Domain"/>
    <property type="match status" value="1"/>
</dbReference>
<dbReference type="Gene3D" id="1.10.3730.10">
    <property type="entry name" value="ProC C-terminal domain-like"/>
    <property type="match status" value="1"/>
</dbReference>
<dbReference type="HAMAP" id="MF_01925">
    <property type="entry name" value="P5C_reductase"/>
    <property type="match status" value="1"/>
</dbReference>
<dbReference type="InterPro" id="IPR008927">
    <property type="entry name" value="6-PGluconate_DH-like_C_sf"/>
</dbReference>
<dbReference type="InterPro" id="IPR036291">
    <property type="entry name" value="NAD(P)-bd_dom_sf"/>
</dbReference>
<dbReference type="InterPro" id="IPR028939">
    <property type="entry name" value="P5C_Rdtase_cat_N"/>
</dbReference>
<dbReference type="InterPro" id="IPR053790">
    <property type="entry name" value="P5CR-like_CS"/>
</dbReference>
<dbReference type="InterPro" id="IPR029036">
    <property type="entry name" value="P5CR_dimer"/>
</dbReference>
<dbReference type="InterPro" id="IPR000304">
    <property type="entry name" value="Pyrroline-COOH_reductase"/>
</dbReference>
<dbReference type="NCBIfam" id="TIGR00112">
    <property type="entry name" value="proC"/>
    <property type="match status" value="1"/>
</dbReference>
<dbReference type="PANTHER" id="PTHR11645">
    <property type="entry name" value="PYRROLINE-5-CARBOXYLATE REDUCTASE"/>
    <property type="match status" value="1"/>
</dbReference>
<dbReference type="PANTHER" id="PTHR11645:SF0">
    <property type="entry name" value="PYRROLINE-5-CARBOXYLATE REDUCTASE 3"/>
    <property type="match status" value="1"/>
</dbReference>
<dbReference type="Pfam" id="PF03807">
    <property type="entry name" value="F420_oxidored"/>
    <property type="match status" value="1"/>
</dbReference>
<dbReference type="Pfam" id="PF14748">
    <property type="entry name" value="P5CR_dimer"/>
    <property type="match status" value="1"/>
</dbReference>
<dbReference type="PIRSF" id="PIRSF000193">
    <property type="entry name" value="Pyrrol-5-carb_rd"/>
    <property type="match status" value="1"/>
</dbReference>
<dbReference type="SUPFAM" id="SSF48179">
    <property type="entry name" value="6-phosphogluconate dehydrogenase C-terminal domain-like"/>
    <property type="match status" value="1"/>
</dbReference>
<dbReference type="SUPFAM" id="SSF51735">
    <property type="entry name" value="NAD(P)-binding Rossmann-fold domains"/>
    <property type="match status" value="1"/>
</dbReference>
<dbReference type="PROSITE" id="PS00521">
    <property type="entry name" value="P5CR"/>
    <property type="match status" value="1"/>
</dbReference>
<name>P5CR_SCHPO</name>
<accession>Q9P7Y7</accession>
<evidence type="ECO:0000305" key="1"/>
<protein>
    <recommendedName>
        <fullName>Pyrroline-5-carboxylate reductase</fullName>
        <shortName>P5C reductase</shortName>
        <shortName>P5CR</shortName>
        <ecNumber>1.5.1.2</ecNumber>
    </recommendedName>
</protein>
<comment type="catalytic activity">
    <reaction>
        <text>L-proline + NADP(+) = (S)-1-pyrroline-5-carboxylate + NADPH + 2 H(+)</text>
        <dbReference type="Rhea" id="RHEA:14109"/>
        <dbReference type="ChEBI" id="CHEBI:15378"/>
        <dbReference type="ChEBI" id="CHEBI:17388"/>
        <dbReference type="ChEBI" id="CHEBI:57783"/>
        <dbReference type="ChEBI" id="CHEBI:58349"/>
        <dbReference type="ChEBI" id="CHEBI:60039"/>
        <dbReference type="EC" id="1.5.1.2"/>
    </reaction>
</comment>
<comment type="catalytic activity">
    <reaction>
        <text>L-proline + NAD(+) = (S)-1-pyrroline-5-carboxylate + NADH + 2 H(+)</text>
        <dbReference type="Rhea" id="RHEA:14105"/>
        <dbReference type="ChEBI" id="CHEBI:15378"/>
        <dbReference type="ChEBI" id="CHEBI:17388"/>
        <dbReference type="ChEBI" id="CHEBI:57540"/>
        <dbReference type="ChEBI" id="CHEBI:57945"/>
        <dbReference type="ChEBI" id="CHEBI:60039"/>
        <dbReference type="EC" id="1.5.1.2"/>
    </reaction>
</comment>
<comment type="pathway">
    <text>Amino-acid biosynthesis; L-proline biosynthesis; L-proline from L-glutamate 5-semialdehyde: step 1/1.</text>
</comment>
<comment type="similarity">
    <text evidence="1">Belongs to the pyrroline-5-carboxylate reductase family.</text>
</comment>